<name>RL31_CHLP8</name>
<reference key="1">
    <citation type="submission" date="2008-06" db="EMBL/GenBank/DDBJ databases">
        <title>Complete sequence of Chlorobaculum parvum NCIB 8327.</title>
        <authorList>
            <consortium name="US DOE Joint Genome Institute"/>
            <person name="Lucas S."/>
            <person name="Copeland A."/>
            <person name="Lapidus A."/>
            <person name="Glavina del Rio T."/>
            <person name="Dalin E."/>
            <person name="Tice H."/>
            <person name="Bruce D."/>
            <person name="Goodwin L."/>
            <person name="Pitluck S."/>
            <person name="Schmutz J."/>
            <person name="Larimer F."/>
            <person name="Land M."/>
            <person name="Hauser L."/>
            <person name="Kyrpides N."/>
            <person name="Mikhailova N."/>
            <person name="Zhao F."/>
            <person name="Li T."/>
            <person name="Liu Z."/>
            <person name="Overmann J."/>
            <person name="Bryant D.A."/>
            <person name="Richardson P."/>
        </authorList>
    </citation>
    <scope>NUCLEOTIDE SEQUENCE [LARGE SCALE GENOMIC DNA]</scope>
    <source>
        <strain>DSM 263 / NCIMB 8327</strain>
    </source>
</reference>
<comment type="function">
    <text evidence="1">Binds the 23S rRNA.</text>
</comment>
<comment type="subunit">
    <text evidence="1">Part of the 50S ribosomal subunit.</text>
</comment>
<comment type="similarity">
    <text evidence="1">Belongs to the bacterial ribosomal protein bL31 family. Type A subfamily.</text>
</comment>
<feature type="chain" id="PRO_1000126585" description="Large ribosomal subunit protein bL31">
    <location>
        <begin position="1"/>
        <end position="74"/>
    </location>
</feature>
<organism>
    <name type="scientific">Chlorobaculum parvum (strain DSM 263 / NCIMB 8327)</name>
    <name type="common">Chlorobium vibrioforme subsp. thiosulfatophilum</name>
    <dbReference type="NCBI Taxonomy" id="517417"/>
    <lineage>
        <taxon>Bacteria</taxon>
        <taxon>Pseudomonadati</taxon>
        <taxon>Chlorobiota</taxon>
        <taxon>Chlorobiia</taxon>
        <taxon>Chlorobiales</taxon>
        <taxon>Chlorobiaceae</taxon>
        <taxon>Chlorobaculum</taxon>
    </lineage>
</organism>
<gene>
    <name evidence="1" type="primary">rpmE</name>
    <name type="ordered locus">Cpar_0383</name>
</gene>
<proteinExistence type="inferred from homology"/>
<accession>B3QL18</accession>
<keyword id="KW-0687">Ribonucleoprotein</keyword>
<keyword id="KW-0689">Ribosomal protein</keyword>
<keyword id="KW-0694">RNA-binding</keyword>
<keyword id="KW-0699">rRNA-binding</keyword>
<dbReference type="EMBL" id="CP001099">
    <property type="protein sequence ID" value="ACF10806.1"/>
    <property type="molecule type" value="Genomic_DNA"/>
</dbReference>
<dbReference type="RefSeq" id="WP_012501639.1">
    <property type="nucleotide sequence ID" value="NC_011027.1"/>
</dbReference>
<dbReference type="SMR" id="B3QL18"/>
<dbReference type="STRING" id="517417.Cpar_0383"/>
<dbReference type="KEGG" id="cpc:Cpar_0383"/>
<dbReference type="eggNOG" id="COG0254">
    <property type="taxonomic scope" value="Bacteria"/>
</dbReference>
<dbReference type="HOGENOM" id="CLU_114306_4_2_10"/>
<dbReference type="OrthoDB" id="9803251at2"/>
<dbReference type="Proteomes" id="UP000008811">
    <property type="component" value="Chromosome"/>
</dbReference>
<dbReference type="GO" id="GO:1990904">
    <property type="term" value="C:ribonucleoprotein complex"/>
    <property type="evidence" value="ECO:0007669"/>
    <property type="project" value="UniProtKB-KW"/>
</dbReference>
<dbReference type="GO" id="GO:0005840">
    <property type="term" value="C:ribosome"/>
    <property type="evidence" value="ECO:0007669"/>
    <property type="project" value="UniProtKB-KW"/>
</dbReference>
<dbReference type="GO" id="GO:0019843">
    <property type="term" value="F:rRNA binding"/>
    <property type="evidence" value="ECO:0007669"/>
    <property type="project" value="UniProtKB-KW"/>
</dbReference>
<dbReference type="GO" id="GO:0003735">
    <property type="term" value="F:structural constituent of ribosome"/>
    <property type="evidence" value="ECO:0007669"/>
    <property type="project" value="InterPro"/>
</dbReference>
<dbReference type="GO" id="GO:0006412">
    <property type="term" value="P:translation"/>
    <property type="evidence" value="ECO:0007669"/>
    <property type="project" value="UniProtKB-UniRule"/>
</dbReference>
<dbReference type="Gene3D" id="4.10.830.30">
    <property type="entry name" value="Ribosomal protein L31"/>
    <property type="match status" value="1"/>
</dbReference>
<dbReference type="HAMAP" id="MF_00501">
    <property type="entry name" value="Ribosomal_bL31_1"/>
    <property type="match status" value="1"/>
</dbReference>
<dbReference type="InterPro" id="IPR034704">
    <property type="entry name" value="Ribosomal_bL28/bL31-like_sf"/>
</dbReference>
<dbReference type="InterPro" id="IPR002150">
    <property type="entry name" value="Ribosomal_bL31"/>
</dbReference>
<dbReference type="InterPro" id="IPR027491">
    <property type="entry name" value="Ribosomal_bL31_A"/>
</dbReference>
<dbReference type="InterPro" id="IPR042105">
    <property type="entry name" value="Ribosomal_bL31_sf"/>
</dbReference>
<dbReference type="NCBIfam" id="TIGR00105">
    <property type="entry name" value="L31"/>
    <property type="match status" value="1"/>
</dbReference>
<dbReference type="NCBIfam" id="NF000612">
    <property type="entry name" value="PRK00019.1"/>
    <property type="match status" value="1"/>
</dbReference>
<dbReference type="NCBIfam" id="NF001809">
    <property type="entry name" value="PRK00528.1"/>
    <property type="match status" value="1"/>
</dbReference>
<dbReference type="PANTHER" id="PTHR33280">
    <property type="entry name" value="50S RIBOSOMAL PROTEIN L31, CHLOROPLASTIC"/>
    <property type="match status" value="1"/>
</dbReference>
<dbReference type="PANTHER" id="PTHR33280:SF1">
    <property type="entry name" value="LARGE RIBOSOMAL SUBUNIT PROTEIN BL31C"/>
    <property type="match status" value="1"/>
</dbReference>
<dbReference type="Pfam" id="PF01197">
    <property type="entry name" value="Ribosomal_L31"/>
    <property type="match status" value="1"/>
</dbReference>
<dbReference type="PRINTS" id="PR01249">
    <property type="entry name" value="RIBOSOMALL31"/>
</dbReference>
<dbReference type="SUPFAM" id="SSF143800">
    <property type="entry name" value="L28p-like"/>
    <property type="match status" value="1"/>
</dbReference>
<dbReference type="PROSITE" id="PS01143">
    <property type="entry name" value="RIBOSOMAL_L31"/>
    <property type="match status" value="1"/>
</dbReference>
<evidence type="ECO:0000255" key="1">
    <source>
        <dbReference type="HAMAP-Rule" id="MF_00501"/>
    </source>
</evidence>
<evidence type="ECO:0000305" key="2"/>
<sequence length="74" mass="8234">MKPEIHPKYTKVTVNCANCGTSFETRSTRNNIKVDICSSCHPFYTGKQVLVDTAGRVERFKKRFAKAAPKAAAN</sequence>
<protein>
    <recommendedName>
        <fullName evidence="1">Large ribosomal subunit protein bL31</fullName>
    </recommendedName>
    <alternativeName>
        <fullName evidence="2">50S ribosomal protein L31</fullName>
    </alternativeName>
</protein>